<feature type="chain" id="PRO_0000151031" description="Transmembrane ascorbate-dependent reductase CYB561">
    <location>
        <begin position="1"/>
        <end position="252"/>
    </location>
</feature>
<feature type="topological domain" description="Cytoplasmic" evidence="2">
    <location>
        <begin position="1"/>
        <end position="17"/>
    </location>
</feature>
<feature type="transmembrane region" description="Helical" evidence="4">
    <location>
        <begin position="18"/>
        <end position="38"/>
    </location>
</feature>
<feature type="topological domain" description="Vesicular" evidence="2">
    <location>
        <begin position="39"/>
        <end position="52"/>
    </location>
</feature>
<feature type="transmembrane region" description="Helical" evidence="4">
    <location>
        <begin position="53"/>
        <end position="73"/>
    </location>
</feature>
<feature type="topological domain" description="Cytoplasmic" evidence="2">
    <location>
        <begin position="74"/>
        <end position="86"/>
    </location>
</feature>
<feature type="transmembrane region" description="Helical" evidence="4">
    <location>
        <begin position="87"/>
        <end position="107"/>
    </location>
</feature>
<feature type="topological domain" description="Vesicular" evidence="2">
    <location>
        <begin position="108"/>
        <end position="125"/>
    </location>
</feature>
<feature type="transmembrane region" description="Helical" evidence="4">
    <location>
        <begin position="126"/>
        <end position="146"/>
    </location>
</feature>
<feature type="topological domain" description="Cytoplasmic" evidence="2">
    <location>
        <begin position="147"/>
        <end position="159"/>
    </location>
</feature>
<feature type="transmembrane region" description="Helical" evidence="4">
    <location>
        <begin position="160"/>
        <end position="180"/>
    </location>
</feature>
<feature type="topological domain" description="Vesicular" evidence="2">
    <location>
        <begin position="181"/>
        <end position="199"/>
    </location>
</feature>
<feature type="transmembrane region" description="Helical" evidence="4">
    <location>
        <begin position="200"/>
        <end position="220"/>
    </location>
</feature>
<feature type="topological domain" description="Cytoplasmic" evidence="2">
    <location>
        <begin position="221"/>
        <end position="252"/>
    </location>
</feature>
<feature type="domain" description="Cytochrome b561" evidence="5">
    <location>
        <begin position="20"/>
        <end position="221"/>
    </location>
</feature>
<feature type="binding site" description="axial binding residue" evidence="2">
    <location>
        <position position="54"/>
    </location>
    <ligand>
        <name>heme b</name>
        <dbReference type="ChEBI" id="CHEBI:60344"/>
        <label>1</label>
    </ligand>
    <ligandPart>
        <name>Fe</name>
        <dbReference type="ChEBI" id="CHEBI:18248"/>
    </ligandPart>
</feature>
<feature type="binding site" evidence="2">
    <location>
        <position position="74"/>
    </location>
    <ligand>
        <name>heme b</name>
        <dbReference type="ChEBI" id="CHEBI:60344"/>
        <label>2</label>
    </ligand>
</feature>
<feature type="binding site" evidence="2">
    <location>
        <position position="81"/>
    </location>
    <ligand>
        <name>heme b</name>
        <dbReference type="ChEBI" id="CHEBI:60344"/>
        <label>2</label>
    </ligand>
</feature>
<feature type="binding site" evidence="2">
    <location>
        <position position="81"/>
    </location>
    <ligand>
        <name>L-ascorbate</name>
        <dbReference type="ChEBI" id="CHEBI:38290"/>
    </ligand>
</feature>
<feature type="binding site" evidence="2">
    <location>
        <position position="85"/>
    </location>
    <ligand>
        <name>L-ascorbate</name>
        <dbReference type="ChEBI" id="CHEBI:38290"/>
    </ligand>
</feature>
<feature type="binding site" description="axial binding residue" evidence="2">
    <location>
        <position position="88"/>
    </location>
    <ligand>
        <name>heme b</name>
        <dbReference type="ChEBI" id="CHEBI:60344"/>
        <label>2</label>
    </ligand>
    <ligandPart>
        <name>Fe</name>
        <dbReference type="ChEBI" id="CHEBI:18248"/>
    </ligandPart>
</feature>
<feature type="binding site" evidence="2">
    <location>
        <begin position="117"/>
        <end position="120"/>
    </location>
    <ligand>
        <name>heme b</name>
        <dbReference type="ChEBI" id="CHEBI:60344"/>
        <label>1</label>
    </ligand>
</feature>
<feature type="binding site" description="axial binding residue" evidence="2">
    <location>
        <position position="122"/>
    </location>
    <ligand>
        <name>heme b</name>
        <dbReference type="ChEBI" id="CHEBI:60344"/>
        <label>1</label>
    </ligand>
    <ligandPart>
        <name>Fe</name>
        <dbReference type="ChEBI" id="CHEBI:18248"/>
    </ligandPart>
</feature>
<feature type="binding site" evidence="2">
    <location>
        <position position="154"/>
    </location>
    <ligand>
        <name>L-ascorbate</name>
        <dbReference type="ChEBI" id="CHEBI:38290"/>
    </ligand>
</feature>
<feature type="binding site" description="axial binding residue" evidence="2">
    <location>
        <position position="161"/>
    </location>
    <ligand>
        <name>heme b</name>
        <dbReference type="ChEBI" id="CHEBI:60344"/>
        <label>2</label>
    </ligand>
    <ligandPart>
        <name>Fe</name>
        <dbReference type="ChEBI" id="CHEBI:18248"/>
    </ligandPart>
</feature>
<feature type="binding site" evidence="2">
    <location>
        <position position="182"/>
    </location>
    <ligand>
        <name>heme b</name>
        <dbReference type="ChEBI" id="CHEBI:60344"/>
        <label>1</label>
    </ligand>
</feature>
<feature type="binding site" evidence="2">
    <location>
        <position position="226"/>
    </location>
    <ligand>
        <name>heme b</name>
        <dbReference type="ChEBI" id="CHEBI:60344"/>
        <label>2</label>
    </ligand>
</feature>
<feature type="modified residue" description="N-acetylmethionine" evidence="1">
    <location>
        <position position="1"/>
    </location>
</feature>
<feature type="modified residue" description="Phosphoserine" evidence="3">
    <location>
        <position position="248"/>
    </location>
</feature>
<feature type="modified residue" description="Phosphoserine" evidence="3">
    <location>
        <position position="250"/>
    </location>
</feature>
<keyword id="KW-0007">Acetylation</keyword>
<keyword id="KW-0968">Cytoplasmic vesicle</keyword>
<keyword id="KW-0249">Electron transport</keyword>
<keyword id="KW-0349">Heme</keyword>
<keyword id="KW-0408">Iron</keyword>
<keyword id="KW-0472">Membrane</keyword>
<keyword id="KW-0479">Metal-binding</keyword>
<keyword id="KW-0597">Phosphoprotein</keyword>
<keyword id="KW-1185">Reference proteome</keyword>
<keyword id="KW-1278">Translocase</keyword>
<keyword id="KW-0812">Transmembrane</keyword>
<keyword id="KW-1133">Transmembrane helix</keyword>
<keyword id="KW-0813">Transport</keyword>
<organism>
    <name type="scientific">Ovis aries</name>
    <name type="common">Sheep</name>
    <dbReference type="NCBI Taxonomy" id="9940"/>
    <lineage>
        <taxon>Eukaryota</taxon>
        <taxon>Metazoa</taxon>
        <taxon>Chordata</taxon>
        <taxon>Craniata</taxon>
        <taxon>Vertebrata</taxon>
        <taxon>Euteleostomi</taxon>
        <taxon>Mammalia</taxon>
        <taxon>Eutheria</taxon>
        <taxon>Laurasiatheria</taxon>
        <taxon>Artiodactyla</taxon>
        <taxon>Ruminantia</taxon>
        <taxon>Pecora</taxon>
        <taxon>Bovidae</taxon>
        <taxon>Caprinae</taxon>
        <taxon>Ovis</taxon>
    </lineage>
</organism>
<reference key="1">
    <citation type="journal article" date="1998" name="Biochim. Biophys. Acta">
        <title>Structural basis for the electron transfer across the chromaffin vesicle membranes catalyzed by cytochrome b561: analyses of cDNA nucleotide sequences and visible absorption spectra.</title>
        <authorList>
            <person name="Okuyama E."/>
            <person name="Yamamoto R."/>
            <person name="Ichikawa Y."/>
            <person name="Tsubaki M."/>
        </authorList>
    </citation>
    <scope>NUCLEOTIDE SEQUENCE [MRNA]</scope>
    <source>
        <tissue>Adrenal medulla</tissue>
    </source>
</reference>
<gene>
    <name type="primary">CYB561</name>
</gene>
<protein>
    <recommendedName>
        <fullName evidence="6">Transmembrane ascorbate-dependent reductase CYB561</fullName>
        <ecNumber evidence="1">7.2.1.-</ecNumber>
    </recommendedName>
    <alternativeName>
        <fullName>Cytochrome b-561</fullName>
    </alternativeName>
    <alternativeName>
        <fullName>Cytochrome b561</fullName>
    </alternativeName>
</protein>
<sequence>MEGPASPAPAPGALPYYVAFSQLLGLTVVAMTGAWLGMYRGGIAWESALQFNVHPLCMVIGLVFLQGDALLVYRVFRNEAKRTTKVLHGLLHVFAFVIALVGLVAVFEHHRKKGYADLYSLHSWCGILVFALFFAQWLVGFSFFLFPGASFSLRSRYRPQHVFFGAAIFLLSVATALLGLKEALLFELGTKYSTFEPEGVLANVLGLLLAAFATVVLYILTRADWKRPLQAEEQALSMDFKTLTEGDSPSSQ</sequence>
<name>CY561_SHEEP</name>
<dbReference type="EC" id="7.2.1.-" evidence="1"/>
<dbReference type="EMBL" id="D88157">
    <property type="protein sequence ID" value="BAA13548.1"/>
    <property type="molecule type" value="mRNA"/>
</dbReference>
<dbReference type="RefSeq" id="NP_001087259.1">
    <property type="nucleotide sequence ID" value="NM_001093790.1"/>
</dbReference>
<dbReference type="RefSeq" id="XP_027829724.2">
    <property type="nucleotide sequence ID" value="XM_027973923.2"/>
</dbReference>
<dbReference type="RefSeq" id="XP_042111105.1">
    <property type="nucleotide sequence ID" value="XM_042255171.1"/>
</dbReference>
<dbReference type="RefSeq" id="XP_042111106.1">
    <property type="nucleotide sequence ID" value="XM_042255172.2"/>
</dbReference>
<dbReference type="RefSeq" id="XP_042111107.1">
    <property type="nucleotide sequence ID" value="XM_042255173.1"/>
</dbReference>
<dbReference type="RefSeq" id="XP_060250650.1">
    <property type="nucleotide sequence ID" value="XM_060394667.1"/>
</dbReference>
<dbReference type="RefSeq" id="XP_060250651.1">
    <property type="nucleotide sequence ID" value="XM_060394668.1"/>
</dbReference>
<dbReference type="SMR" id="Q95204"/>
<dbReference type="STRING" id="9940.ENSOARP00000013809"/>
<dbReference type="PaxDb" id="9940-ENSOARP00000013809"/>
<dbReference type="Ensembl" id="ENSOART00020033368">
    <property type="protein sequence ID" value="ENSOARP00020027579"/>
    <property type="gene ID" value="ENSOARG00020021546"/>
</dbReference>
<dbReference type="Ensembl" id="ENSOART00040033144">
    <property type="protein sequence ID" value="ENSOARP00040017155"/>
    <property type="gene ID" value="ENSOARG00040019886"/>
</dbReference>
<dbReference type="GeneID" id="100048995"/>
<dbReference type="KEGG" id="oas:100048995"/>
<dbReference type="CTD" id="1534"/>
<dbReference type="eggNOG" id="KOG1619">
    <property type="taxonomic scope" value="Eukaryota"/>
</dbReference>
<dbReference type="OrthoDB" id="907479at2759"/>
<dbReference type="Proteomes" id="UP000002356">
    <property type="component" value="Unplaced"/>
</dbReference>
<dbReference type="GO" id="GO:0042584">
    <property type="term" value="C:chromaffin granule membrane"/>
    <property type="evidence" value="ECO:0000250"/>
    <property type="project" value="UniProtKB"/>
</dbReference>
<dbReference type="GO" id="GO:0005765">
    <property type="term" value="C:lysosomal membrane"/>
    <property type="evidence" value="ECO:0007669"/>
    <property type="project" value="TreeGrafter"/>
</dbReference>
<dbReference type="GO" id="GO:0046872">
    <property type="term" value="F:metal ion binding"/>
    <property type="evidence" value="ECO:0007669"/>
    <property type="project" value="UniProtKB-KW"/>
</dbReference>
<dbReference type="GO" id="GO:0140575">
    <property type="term" value="F:transmembrane monodehydroascorbate reductase activity"/>
    <property type="evidence" value="ECO:0000250"/>
    <property type="project" value="UniProtKB"/>
</dbReference>
<dbReference type="GO" id="GO:0140576">
    <property type="term" value="P:ascorbate homeostasis"/>
    <property type="evidence" value="ECO:0000250"/>
    <property type="project" value="UniProtKB"/>
</dbReference>
<dbReference type="FunFam" id="1.20.120.1770:FF:000001">
    <property type="entry name" value="Cytochrome b reductase 1"/>
    <property type="match status" value="1"/>
</dbReference>
<dbReference type="Gene3D" id="1.20.120.1770">
    <property type="match status" value="1"/>
</dbReference>
<dbReference type="InterPro" id="IPR043205">
    <property type="entry name" value="CYB561/CYBRD1-like"/>
</dbReference>
<dbReference type="InterPro" id="IPR006593">
    <property type="entry name" value="Cyt_b561/ferric_Rdtase_TM"/>
</dbReference>
<dbReference type="PANTHER" id="PTHR10106">
    <property type="entry name" value="CYTOCHROME B561-RELATED"/>
    <property type="match status" value="1"/>
</dbReference>
<dbReference type="PANTHER" id="PTHR10106:SF14">
    <property type="entry name" value="TRANSMEMBRANE ASCORBATE-DEPENDENT REDUCTASE CYB561"/>
    <property type="match status" value="1"/>
</dbReference>
<dbReference type="Pfam" id="PF03188">
    <property type="entry name" value="Cytochrom_B561"/>
    <property type="match status" value="1"/>
</dbReference>
<dbReference type="SMART" id="SM00665">
    <property type="entry name" value="B561"/>
    <property type="match status" value="1"/>
</dbReference>
<dbReference type="PROSITE" id="PS50939">
    <property type="entry name" value="CYTOCHROME_B561"/>
    <property type="match status" value="1"/>
</dbReference>
<accession>Q95204</accession>
<evidence type="ECO:0000250" key="1">
    <source>
        <dbReference type="UniProtKB" id="P10897"/>
    </source>
</evidence>
<evidence type="ECO:0000250" key="2">
    <source>
        <dbReference type="UniProtKB" id="Q53TN4"/>
    </source>
</evidence>
<evidence type="ECO:0000250" key="3">
    <source>
        <dbReference type="UniProtKB" id="Q60720"/>
    </source>
</evidence>
<evidence type="ECO:0000255" key="4"/>
<evidence type="ECO:0000255" key="5">
    <source>
        <dbReference type="PROSITE-ProRule" id="PRU00242"/>
    </source>
</evidence>
<evidence type="ECO:0000305" key="6"/>
<proteinExistence type="evidence at transcript level"/>
<comment type="function">
    <text evidence="1">Transmembrane reductase that uses ascorbate as an electron donor in the cytoplasm and transfers electrons across membranes to reduce monodehydro-L-ascorbate radical in the lumen of secretory vesicles. It is therefore involved the regeneration and homeostasis within secretory vesicles of ascorbate which in turn provides reducing equivalents needed to support the activity of intravesicular enzymes.</text>
</comment>
<comment type="catalytic activity">
    <reaction evidence="1">
        <text>monodehydro-L-ascorbate radical(out) + L-ascorbate(in) = monodehydro-L-ascorbate radical(in) + L-ascorbate(out)</text>
        <dbReference type="Rhea" id="RHEA:66524"/>
        <dbReference type="ChEBI" id="CHEBI:38290"/>
        <dbReference type="ChEBI" id="CHEBI:59513"/>
    </reaction>
    <physiologicalReaction direction="left-to-right" evidence="1">
        <dbReference type="Rhea" id="RHEA:66525"/>
    </physiologicalReaction>
</comment>
<comment type="cofactor">
    <cofactor evidence="1">
        <name>heme b</name>
        <dbReference type="ChEBI" id="CHEBI:60344"/>
    </cofactor>
    <text evidence="1">Binds 2 heme b groups non-covalently.</text>
</comment>
<comment type="subcellular location">
    <subcellularLocation>
        <location evidence="1">Cytoplasmic vesicle</location>
        <location evidence="1">Secretory vesicle</location>
        <location evidence="1">Chromaffin granule membrane</location>
        <topology evidence="2">Multi-pass membrane protein</topology>
    </subcellularLocation>
    <text evidence="1">Secretory vesicle containing catecholamines and amidated peptides.</text>
</comment>